<protein>
    <recommendedName>
        <fullName>Negative regulator of flagellin synthesis</fullName>
    </recommendedName>
    <alternativeName>
        <fullName>Anti-sigma-28 factor</fullName>
    </alternativeName>
</protein>
<comment type="function">
    <text evidence="1">Responsible for the coupling of flagellin expression to flagellar assembly by preventing expression of the flagellin genes when a component of the middle class of proteins is defective. It negatively regulates flagellar genes by inhibiting the activity of FliA by directly binding to FliA (By similarity).</text>
</comment>
<comment type="similarity">
    <text evidence="2">Belongs to the FlgM family.</text>
</comment>
<dbReference type="EMBL" id="U82214">
    <property type="protein sequence ID" value="AAC45659.1"/>
    <property type="molecule type" value="Genomic_DNA"/>
</dbReference>
<dbReference type="RefSeq" id="WP_004243540.1">
    <property type="nucleotide sequence ID" value="NZ_VKXK01000019.1"/>
</dbReference>
<dbReference type="STRING" id="584.AOUC001_07290"/>
<dbReference type="PATRIC" id="fig|584.131.peg.1973"/>
<dbReference type="GO" id="GO:0044781">
    <property type="term" value="P:bacterial-type flagellum organization"/>
    <property type="evidence" value="ECO:0007669"/>
    <property type="project" value="UniProtKB-KW"/>
</dbReference>
<dbReference type="GO" id="GO:0045892">
    <property type="term" value="P:negative regulation of DNA-templated transcription"/>
    <property type="evidence" value="ECO:0007669"/>
    <property type="project" value="InterPro"/>
</dbReference>
<dbReference type="InterPro" id="IPR035890">
    <property type="entry name" value="Anti-sigma-28_factor_FlgM_sf"/>
</dbReference>
<dbReference type="InterPro" id="IPR007412">
    <property type="entry name" value="FlgM"/>
</dbReference>
<dbReference type="InterPro" id="IPR031316">
    <property type="entry name" value="FlgM_C"/>
</dbReference>
<dbReference type="NCBIfam" id="TIGR03824">
    <property type="entry name" value="FlgM_jcvi"/>
    <property type="match status" value="1"/>
</dbReference>
<dbReference type="Pfam" id="PF04316">
    <property type="entry name" value="FlgM"/>
    <property type="match status" value="1"/>
</dbReference>
<dbReference type="SUPFAM" id="SSF101498">
    <property type="entry name" value="Anti-sigma factor FlgM"/>
    <property type="match status" value="1"/>
</dbReference>
<keyword id="KW-1005">Bacterial flagellum biogenesis</keyword>
<keyword id="KW-0678">Repressor</keyword>
<keyword id="KW-0804">Transcription</keyword>
<keyword id="KW-0805">Transcription regulation</keyword>
<evidence type="ECO:0000250" key="1"/>
<evidence type="ECO:0000305" key="2"/>
<feature type="chain" id="PRO_0000087285" description="Negative regulator of flagellin synthesis">
    <location>
        <begin position="1"/>
        <end position="99"/>
    </location>
</feature>
<sequence>MSIERTNPLIPITAISQRNLNEGAQEARKTGNAQTKAMAGDTSVKLSEAQKKLVQPSNQDINVEKVARLKAAIADGTLTMDSSKIAEALFREAAESITK</sequence>
<organism>
    <name type="scientific">Proteus mirabilis</name>
    <dbReference type="NCBI Taxonomy" id="584"/>
    <lineage>
        <taxon>Bacteria</taxon>
        <taxon>Pseudomonadati</taxon>
        <taxon>Pseudomonadota</taxon>
        <taxon>Gammaproteobacteria</taxon>
        <taxon>Enterobacterales</taxon>
        <taxon>Morganellaceae</taxon>
        <taxon>Proteus</taxon>
    </lineage>
</organism>
<proteinExistence type="inferred from homology"/>
<gene>
    <name type="primary">flgM</name>
</gene>
<accession>P96974</accession>
<name>FLGM_PROMI</name>
<reference key="1">
    <citation type="journal article" date="1997" name="Mol. Microbiol.">
        <title>A motile but non-swarming mutant of Proteus mirabilis lacks FlgN, a facilitator of flagella filament assembly.</title>
        <authorList>
            <person name="Gygi D."/>
            <person name="Fraser G."/>
            <person name="Dufour A."/>
            <person name="Hughes C."/>
        </authorList>
    </citation>
    <scope>NUCLEOTIDE SEQUENCE [GENOMIC DNA]</scope>
    <source>
        <strain>U6540</strain>
    </source>
</reference>